<name>BRD10_HUMAN</name>
<evidence type="ECO:0000255" key="1">
    <source>
        <dbReference type="PROSITE-ProRule" id="PRU00035"/>
    </source>
</evidence>
<evidence type="ECO:0000256" key="2">
    <source>
        <dbReference type="SAM" id="MobiDB-lite"/>
    </source>
</evidence>
<evidence type="ECO:0000303" key="3">
    <source>
    </source>
</evidence>
<evidence type="ECO:0000305" key="4"/>
<evidence type="ECO:0000305" key="5">
    <source>
    </source>
</evidence>
<evidence type="ECO:0000312" key="6">
    <source>
        <dbReference type="HGNC" id="HGNC:23378"/>
    </source>
</evidence>
<dbReference type="EMBL" id="AL162384">
    <property type="status" value="NOT_ANNOTATED_CDS"/>
    <property type="molecule type" value="Genomic_DNA"/>
</dbReference>
<dbReference type="EMBL" id="AL353606">
    <property type="status" value="NOT_ANNOTATED_CDS"/>
    <property type="molecule type" value="Genomic_DNA"/>
</dbReference>
<dbReference type="EMBL" id="AL365360">
    <property type="status" value="NOT_ANNOTATED_CDS"/>
    <property type="molecule type" value="Genomic_DNA"/>
</dbReference>
<dbReference type="EMBL" id="BX648372">
    <property type="protein sequence ID" value="CAI45993.1"/>
    <property type="status" value="ALT_INIT"/>
    <property type="molecule type" value="mRNA"/>
</dbReference>
<dbReference type="EMBL" id="BC136846">
    <property type="protein sequence ID" value="AAI36847.1"/>
    <property type="status" value="ALT_INIT"/>
    <property type="molecule type" value="mRNA"/>
</dbReference>
<dbReference type="EMBL" id="AB095946">
    <property type="protein sequence ID" value="BAC23122.1"/>
    <property type="molecule type" value="mRNA"/>
</dbReference>
<dbReference type="RefSeq" id="NP_001017969.2">
    <molecule id="Q5HYC2-1"/>
    <property type="nucleotide sequence ID" value="NM_001017969.3"/>
</dbReference>
<dbReference type="RefSeq" id="XP_005251442.1">
    <molecule id="Q5HYC2-2"/>
    <property type="nucleotide sequence ID" value="XM_005251385.4"/>
</dbReference>
<dbReference type="RefSeq" id="XP_011516063.1">
    <property type="nucleotide sequence ID" value="XM_011517761.2"/>
</dbReference>
<dbReference type="RefSeq" id="XP_016869821.1">
    <property type="nucleotide sequence ID" value="XM_017014332.1"/>
</dbReference>
<dbReference type="RefSeq" id="XP_016869822.1">
    <property type="nucleotide sequence ID" value="XM_017014333.1"/>
</dbReference>
<dbReference type="RefSeq" id="XP_016869823.1">
    <property type="nucleotide sequence ID" value="XM_017014334.1"/>
</dbReference>
<dbReference type="SMR" id="Q5HYC2"/>
<dbReference type="BioGRID" id="127672">
    <property type="interactions" value="14"/>
</dbReference>
<dbReference type="FunCoup" id="Q5HYC2">
    <property type="interactions" value="2479"/>
</dbReference>
<dbReference type="IntAct" id="Q5HYC2">
    <property type="interactions" value="7"/>
</dbReference>
<dbReference type="STRING" id="9606.ENSP00000382815"/>
<dbReference type="GlyCosmos" id="Q5HYC2">
    <property type="glycosylation" value="1 site, 1 glycan"/>
</dbReference>
<dbReference type="GlyGen" id="Q5HYC2">
    <property type="glycosylation" value="14 sites, 1 O-linked glycan (12 sites)"/>
</dbReference>
<dbReference type="iPTMnet" id="Q5HYC2"/>
<dbReference type="PhosphoSitePlus" id="Q5HYC2"/>
<dbReference type="SwissPalm" id="Q5HYC2"/>
<dbReference type="BioMuta" id="KIAA2026"/>
<dbReference type="DMDM" id="298286816"/>
<dbReference type="jPOST" id="Q5HYC2"/>
<dbReference type="MassIVE" id="Q5HYC2"/>
<dbReference type="PaxDb" id="9606-ENSP00000382815"/>
<dbReference type="PeptideAtlas" id="Q5HYC2"/>
<dbReference type="ProteomicsDB" id="62929">
    <molecule id="Q5HYC2-1"/>
</dbReference>
<dbReference type="ProteomicsDB" id="62930">
    <molecule id="Q5HYC2-2"/>
</dbReference>
<dbReference type="Antibodypedia" id="955">
    <property type="antibodies" value="8 antibodies from 7 providers"/>
</dbReference>
<dbReference type="DNASU" id="158358"/>
<dbReference type="Ensembl" id="ENST00000381461.6">
    <molecule id="Q5HYC2-2"/>
    <property type="protein sequence ID" value="ENSP00000370870.2"/>
    <property type="gene ID" value="ENSG00000183354.12"/>
</dbReference>
<dbReference type="Ensembl" id="ENST00000399933.8">
    <molecule id="Q5HYC2-1"/>
    <property type="protein sequence ID" value="ENSP00000382815.3"/>
    <property type="gene ID" value="ENSG00000183354.12"/>
</dbReference>
<dbReference type="GeneID" id="158358"/>
<dbReference type="KEGG" id="hsa:158358"/>
<dbReference type="MANE-Select" id="ENST00000399933.8">
    <property type="protein sequence ID" value="ENSP00000382815.3"/>
    <property type="RefSeq nucleotide sequence ID" value="NM_001017969.3"/>
    <property type="RefSeq protein sequence ID" value="NP_001017969.2"/>
</dbReference>
<dbReference type="UCSC" id="uc003zjq.5">
    <molecule id="Q5HYC2-1"/>
    <property type="organism name" value="human"/>
</dbReference>
<dbReference type="AGR" id="HGNC:23378"/>
<dbReference type="CTD" id="158358"/>
<dbReference type="DisGeNET" id="158358"/>
<dbReference type="GeneCards" id="BRD10"/>
<dbReference type="HGNC" id="HGNC:23378">
    <property type="gene designation" value="BRD10"/>
</dbReference>
<dbReference type="HPA" id="ENSG00000183354">
    <property type="expression patterns" value="Low tissue specificity"/>
</dbReference>
<dbReference type="neXtProt" id="NX_Q5HYC2"/>
<dbReference type="OpenTargets" id="ENSG00000183354"/>
<dbReference type="PharmGKB" id="PA134907262"/>
<dbReference type="VEuPathDB" id="HostDB:ENSG00000183354"/>
<dbReference type="eggNOG" id="ENOG502QQC8">
    <property type="taxonomic scope" value="Eukaryota"/>
</dbReference>
<dbReference type="GeneTree" id="ENSGT00390000011483"/>
<dbReference type="HOGENOM" id="CLU_001633_0_0_1"/>
<dbReference type="InParanoid" id="Q5HYC2"/>
<dbReference type="OMA" id="DAQENAY"/>
<dbReference type="OrthoDB" id="21449at2759"/>
<dbReference type="PAN-GO" id="Q5HYC2">
    <property type="GO annotations" value="0 GO annotations based on evolutionary models"/>
</dbReference>
<dbReference type="PhylomeDB" id="Q5HYC2"/>
<dbReference type="TreeFam" id="TF336184"/>
<dbReference type="PathwayCommons" id="Q5HYC2"/>
<dbReference type="SignaLink" id="Q5HYC2"/>
<dbReference type="BioGRID-ORCS" id="158358">
    <property type="hits" value="18 hits in 318 CRISPR screens"/>
</dbReference>
<dbReference type="ChiTaRS" id="KIAA2026">
    <property type="organism name" value="human"/>
</dbReference>
<dbReference type="GenomeRNAi" id="158358"/>
<dbReference type="Pharos" id="Q5HYC2">
    <property type="development level" value="Tdark"/>
</dbReference>
<dbReference type="PRO" id="PR:Q5HYC2"/>
<dbReference type="Proteomes" id="UP000005640">
    <property type="component" value="Chromosome 9"/>
</dbReference>
<dbReference type="RNAct" id="Q5HYC2">
    <property type="molecule type" value="protein"/>
</dbReference>
<dbReference type="Bgee" id="ENSG00000183354">
    <property type="expression patterns" value="Expressed in epithelial cell of pancreas and 194 other cell types or tissues"/>
</dbReference>
<dbReference type="ExpressionAtlas" id="Q5HYC2">
    <property type="expression patterns" value="baseline and differential"/>
</dbReference>
<dbReference type="GO" id="GO:0005634">
    <property type="term" value="C:nucleus"/>
    <property type="evidence" value="ECO:0007669"/>
    <property type="project" value="UniProtKB-SubCell"/>
</dbReference>
<dbReference type="CDD" id="cd04369">
    <property type="entry name" value="Bromodomain"/>
    <property type="match status" value="1"/>
</dbReference>
<dbReference type="Gene3D" id="1.20.920.10">
    <property type="entry name" value="Bromodomain-like"/>
    <property type="match status" value="1"/>
</dbReference>
<dbReference type="InterPro" id="IPR040214">
    <property type="entry name" value="BRD10"/>
</dbReference>
<dbReference type="InterPro" id="IPR001487">
    <property type="entry name" value="Bromodomain"/>
</dbReference>
<dbReference type="InterPro" id="IPR036427">
    <property type="entry name" value="Bromodomain-like_sf"/>
</dbReference>
<dbReference type="InterPro" id="IPR056522">
    <property type="entry name" value="KIAA2026_hel"/>
</dbReference>
<dbReference type="PANTHER" id="PTHR31095">
    <property type="entry name" value="RIKEN CDNA 9930021J03 GENE"/>
    <property type="match status" value="1"/>
</dbReference>
<dbReference type="PANTHER" id="PTHR31095:SF3">
    <property type="entry name" value="RIKEN CDNA 9930021J03 GENE"/>
    <property type="match status" value="1"/>
</dbReference>
<dbReference type="Pfam" id="PF00439">
    <property type="entry name" value="Bromodomain"/>
    <property type="match status" value="1"/>
</dbReference>
<dbReference type="Pfam" id="PF23450">
    <property type="entry name" value="KIAA2026_hel"/>
    <property type="match status" value="1"/>
</dbReference>
<dbReference type="SUPFAM" id="SSF47370">
    <property type="entry name" value="Bromodomain"/>
    <property type="match status" value="1"/>
</dbReference>
<dbReference type="PROSITE" id="PS50014">
    <property type="entry name" value="BROMODOMAIN_2"/>
    <property type="match status" value="1"/>
</dbReference>
<comment type="subcellular location">
    <subcellularLocation>
        <location evidence="5">Nucleus</location>
    </subcellularLocation>
</comment>
<comment type="alternative products">
    <event type="alternative splicing"/>
    <isoform>
        <id>Q5HYC2-1</id>
        <name>1</name>
        <sequence type="displayed"/>
    </isoform>
    <isoform>
        <id>Q5HYC2-2</id>
        <name>2</name>
        <sequence type="described" ref="VSP_039334"/>
    </isoform>
</comment>
<comment type="sequence caution" evidence="4">
    <conflict type="erroneous initiation">
        <sequence resource="EMBL-CDS" id="AAI36847"/>
    </conflict>
    <text>Truncated N-terminus.</text>
</comment>
<comment type="sequence caution" evidence="4">
    <conflict type="erroneous initiation">
        <sequence resource="EMBL-CDS" id="CAI45993"/>
    </conflict>
    <text>Truncated N-terminus.</text>
</comment>
<keyword id="KW-0025">Alternative splicing</keyword>
<keyword id="KW-0103">Bromodomain</keyword>
<keyword id="KW-0539">Nucleus</keyword>
<keyword id="KW-1267">Proteomics identification</keyword>
<keyword id="KW-1185">Reference proteome</keyword>
<proteinExistence type="evidence at protein level"/>
<reference key="1">
    <citation type="journal article" date="2004" name="Nature">
        <title>DNA sequence and analysis of human chromosome 9.</title>
        <authorList>
            <person name="Humphray S.J."/>
            <person name="Oliver K."/>
            <person name="Hunt A.R."/>
            <person name="Plumb R.W."/>
            <person name="Loveland J.E."/>
            <person name="Howe K.L."/>
            <person name="Andrews T.D."/>
            <person name="Searle S."/>
            <person name="Hunt S.E."/>
            <person name="Scott C.E."/>
            <person name="Jones M.C."/>
            <person name="Ainscough R."/>
            <person name="Almeida J.P."/>
            <person name="Ambrose K.D."/>
            <person name="Ashwell R.I.S."/>
            <person name="Babbage A.K."/>
            <person name="Babbage S."/>
            <person name="Bagguley C.L."/>
            <person name="Bailey J."/>
            <person name="Banerjee R."/>
            <person name="Barker D.J."/>
            <person name="Barlow K.F."/>
            <person name="Bates K."/>
            <person name="Beasley H."/>
            <person name="Beasley O."/>
            <person name="Bird C.P."/>
            <person name="Bray-Allen S."/>
            <person name="Brown A.J."/>
            <person name="Brown J.Y."/>
            <person name="Burford D."/>
            <person name="Burrill W."/>
            <person name="Burton J."/>
            <person name="Carder C."/>
            <person name="Carter N.P."/>
            <person name="Chapman J.C."/>
            <person name="Chen Y."/>
            <person name="Clarke G."/>
            <person name="Clark S.Y."/>
            <person name="Clee C.M."/>
            <person name="Clegg S."/>
            <person name="Collier R.E."/>
            <person name="Corby N."/>
            <person name="Crosier M."/>
            <person name="Cummings A.T."/>
            <person name="Davies J."/>
            <person name="Dhami P."/>
            <person name="Dunn M."/>
            <person name="Dutta I."/>
            <person name="Dyer L.W."/>
            <person name="Earthrowl M.E."/>
            <person name="Faulkner L."/>
            <person name="Fleming C.J."/>
            <person name="Frankish A."/>
            <person name="Frankland J.A."/>
            <person name="French L."/>
            <person name="Fricker D.G."/>
            <person name="Garner P."/>
            <person name="Garnett J."/>
            <person name="Ghori J."/>
            <person name="Gilbert J.G.R."/>
            <person name="Glison C."/>
            <person name="Grafham D.V."/>
            <person name="Gribble S."/>
            <person name="Griffiths C."/>
            <person name="Griffiths-Jones S."/>
            <person name="Grocock R."/>
            <person name="Guy J."/>
            <person name="Hall R.E."/>
            <person name="Hammond S."/>
            <person name="Harley J.L."/>
            <person name="Harrison E.S.I."/>
            <person name="Hart E.A."/>
            <person name="Heath P.D."/>
            <person name="Henderson C.D."/>
            <person name="Hopkins B.L."/>
            <person name="Howard P.J."/>
            <person name="Howden P.J."/>
            <person name="Huckle E."/>
            <person name="Johnson C."/>
            <person name="Johnson D."/>
            <person name="Joy A.A."/>
            <person name="Kay M."/>
            <person name="Keenan S."/>
            <person name="Kershaw J.K."/>
            <person name="Kimberley A.M."/>
            <person name="King A."/>
            <person name="Knights A."/>
            <person name="Laird G.K."/>
            <person name="Langford C."/>
            <person name="Lawlor S."/>
            <person name="Leongamornlert D.A."/>
            <person name="Leversha M."/>
            <person name="Lloyd C."/>
            <person name="Lloyd D.M."/>
            <person name="Lovell J."/>
            <person name="Martin S."/>
            <person name="Mashreghi-Mohammadi M."/>
            <person name="Matthews L."/>
            <person name="McLaren S."/>
            <person name="McLay K.E."/>
            <person name="McMurray A."/>
            <person name="Milne S."/>
            <person name="Nickerson T."/>
            <person name="Nisbett J."/>
            <person name="Nordsiek G."/>
            <person name="Pearce A.V."/>
            <person name="Peck A.I."/>
            <person name="Porter K.M."/>
            <person name="Pandian R."/>
            <person name="Pelan S."/>
            <person name="Phillimore B."/>
            <person name="Povey S."/>
            <person name="Ramsey Y."/>
            <person name="Rand V."/>
            <person name="Scharfe M."/>
            <person name="Sehra H.K."/>
            <person name="Shownkeen R."/>
            <person name="Sims S.K."/>
            <person name="Skuce C.D."/>
            <person name="Smith M."/>
            <person name="Steward C.A."/>
            <person name="Swarbreck D."/>
            <person name="Sycamore N."/>
            <person name="Tester J."/>
            <person name="Thorpe A."/>
            <person name="Tracey A."/>
            <person name="Tromans A."/>
            <person name="Thomas D.W."/>
            <person name="Wall M."/>
            <person name="Wallis J.M."/>
            <person name="West A.P."/>
            <person name="Whitehead S.L."/>
            <person name="Willey D.L."/>
            <person name="Williams S.A."/>
            <person name="Wilming L."/>
            <person name="Wray P.W."/>
            <person name="Young L."/>
            <person name="Ashurst J.L."/>
            <person name="Coulson A."/>
            <person name="Blocker H."/>
            <person name="Durbin R.M."/>
            <person name="Sulston J.E."/>
            <person name="Hubbard T."/>
            <person name="Jackson M.J."/>
            <person name="Bentley D.R."/>
            <person name="Beck S."/>
            <person name="Rogers J."/>
            <person name="Dunham I."/>
        </authorList>
    </citation>
    <scope>NUCLEOTIDE SEQUENCE [LARGE SCALE GENOMIC DNA]</scope>
</reference>
<reference key="2">
    <citation type="journal article" date="2007" name="BMC Genomics">
        <title>The full-ORF clone resource of the German cDNA consortium.</title>
        <authorList>
            <person name="Bechtel S."/>
            <person name="Rosenfelder H."/>
            <person name="Duda A."/>
            <person name="Schmidt C.P."/>
            <person name="Ernst U."/>
            <person name="Wellenreuther R."/>
            <person name="Mehrle A."/>
            <person name="Schuster C."/>
            <person name="Bahr A."/>
            <person name="Bloecker H."/>
            <person name="Heubner D."/>
            <person name="Hoerlein A."/>
            <person name="Michel G."/>
            <person name="Wedler H."/>
            <person name="Koehrer K."/>
            <person name="Ottenwaelder B."/>
            <person name="Poustka A."/>
            <person name="Wiemann S."/>
            <person name="Schupp I."/>
        </authorList>
    </citation>
    <scope>NUCLEOTIDE SEQUENCE [LARGE SCALE MRNA] OF 738-2103 (ISOFORM 2)</scope>
    <source>
        <tissue>Esophageal carcinoma</tissue>
    </source>
</reference>
<reference key="3">
    <citation type="journal article" date="2004" name="Genome Res.">
        <title>The status, quality, and expansion of the NIH full-length cDNA project: the Mammalian Gene Collection (MGC).</title>
        <authorList>
            <consortium name="The MGC Project Team"/>
        </authorList>
    </citation>
    <scope>NUCLEOTIDE SEQUENCE [LARGE SCALE MRNA] OF 819-2103 (ISOFORM 1)</scope>
    <source>
        <tissue>Testis</tissue>
    </source>
</reference>
<reference key="4">
    <citation type="submission" date="2002-11" db="EMBL/GenBank/DDBJ databases">
        <title>The nucleotide sequence of a long cDNA clone isolated from human.</title>
        <authorList>
            <person name="Nagase T."/>
            <person name="Kikuno R."/>
            <person name="Ohara O."/>
        </authorList>
    </citation>
    <scope>NUCLEOTIDE SEQUENCE [LARGE SCALE MRNA] OF 1246-2103 (ISOFORM 1)</scope>
    <source>
        <tissue>Brain</tissue>
    </source>
</reference>
<reference key="5">
    <citation type="journal article" date="2014" name="Cold Spring Harb. Perspect. Biol.">
        <title>Writers and readers of histone acetylation: structure, mechanism, and inhibition.</title>
        <authorList>
            <person name="Marmorstein R."/>
            <person name="Zhou M.M."/>
        </authorList>
    </citation>
    <scope>BROMODOMAIN CONTAINING PROTEIN</scope>
    <scope>SUBCELLULAR LOCATION</scope>
</reference>
<sequence>MSVPGTPGAMEPAGEEERPPPAAEGEDDEEEVAAAAQTSGPAHGRSASSLEDADDQEEEMEAMVIGGGCCKEQELTYELQQGYRILGEFLQEKHRGLTAPFLQPLGGVATAEEEVAEGPRSGGRGGRAFPQQPGQGMCLLQMEEKFASGQYGGITEFVADFRLMLETCYRLHGVDHWISKQGQKLEMMLEQKLALLSRHLREKTTIAVTSRGYYGLEDEKGTACTSTRRRSTPRSLAGLTSGVFESIMVQVLRQEEQLRAKEEKRLREQERKEAEEASQKEIEEWERKLLAQAAPTCMETMWEIPAIGHFLCLAQQILNLPEIVFYELERCLLMPQCNAFLSKIMTSLLSPPHRRPTLHRRPTLPYRTWEAALRQKVQQWYTAVGQTENPDNCAEKLGLCPQFFKVLGEVNPLEEKPFHELPFYQKVWLLKGLCDFVYETQKEVQDAVLGQPIHECREVILGYDYLENAYVHFPQFCGADVRIYKQRPFQAPEFPIPPIKIQRVPRIKLEKLKCDYVSTSNGEHRCSRDSLPSSFKKEQENNFDPACCPAKMILDNHDISVEMGVKSNYEIRIRRPCEIKKTDCCKENLEKPRSPGEVTGFGEPLSPGEIRFIENQEKYGEASRIKIEPSPLKENTLKSCQIHVNGSHSDHPEINCHKVVRDILLEQSLQSHKKLKLTKMRAKKKKKKKKKLKDVLNENLQRKREGLHSLAFKSYKPEIQNKLLIIKKKAKHKKHKSGKKSVSKKAITKKRKTVIKSPTVPEFQLICTNLDELRELITKIENELKDLENSRKKSGKWYHRRQAVKELHSTLIRLLNELLPWEPKLMKAFQRNRSRLKKDYDDFRRQPDHDTFNRELWTTDEGEGDLGKDSPKGEISKSIDSTEPLDILEKDHFDSDDMKLSEIDFPMARSKLLKKELPSKDLPKTLLKTLKRQSKQTDYVDDSTKELSPRKKAKLSTNETTVENLESDVQIDCFSESKHTEPSFPESFASLDSVPVSTLQKGTKPIQALLAKNIGNKVTLTNQLPPSTGRNALAVEKPVLSPPEASPIKPALTCHTNTKGPLQMVYKMPCGQWLPIDLQNSSVKIQVQPMVDPKTGEKIMQQVLILPKNFVIQHKEGKAVAKEVPPLQQKGTEQHCSSFPQTTNINSSLASVFVNSPGTVSTQLPNTAFNKTITPLSNISSARPQPLSPVTSVSNLLTPSVKTSQSEAGKAKNAVSAATFSLPSASPTISSTGQPLSSTTTLNGSTNPGSSFNCFAQQTADSSEAKQELKTVCIRDSQSILVRTRGGNTGVVKVQTNPDQNSPNTVSSSSVFTFAPQLQAFLVPKSTTSSSAFSPVAGTTTTSSLSPFSQTPTSVSIPASFAPSMGKNLKLTLGHTTGSGDLGHVIDKTSHMPSSPLKSSICSSTLLPSTTSSSVSVISISAANFGQNNANIIHTPTKQQQVDYITKSYPVTRSEATAATNGDVISGTPVQKLMLVSAPSILSSGNGTAINMTPALTSTGVSAQKLVFINAPVPSGTSTPTLVAESLKQTLPPPLHKAYVKTPEQPQIVLIPSTVGTPIKINSSPAVSQIKDVKIGLNIGQAIVNTSGTVPAIPSINILQNVTPKGEDKSSKGYILPLSTSGNSVPVSSNFVSQNITPVNESVVSSARAVNVLSVTGANLSLGSFPVTSASASAGAQPPVLVSGNDTSSRIMPILSNRLCSSSLGNTVAISTVKTGHLASSVLISTTQPVVSPKCLTSALQIPVTVALPTPATTSPKIINTVPHSAAVPGATRSVSISKRQSRTSLQFHSPGISTTVPTNVNTNKPQTELSSLSTSPGKITNTSNFASLPNQQALVKTPSYSSAPGGTTIHTASAPSNVTSLVGSQFSEPCIQQKIVINTSTPLAPGTQIMINGTRFIVPPQGLGAGSHVLLISTNPKYGAPLVLNSGQGIQSTPIDNSAQKITLASNNSLSGQPLQHPLRSPTKFINSFGNASSIPTVHTSPQLINTTAKVPVPPPVPTVSLTSVIKSPATLLAKTSLVSAICPSNPPLPSSTSVFHLDPPVKKLLVSPEGAILNTINTPASKVSSLSPSLSQIVVSASRSPASVFPAFQSSGLEKPDRAAS</sequence>
<accession>Q5HYC2</accession>
<accession>A8MTP2</accession>
<accession>B9EGW7</accession>
<accession>Q4VXA2</accession>
<accession>Q8IVE5</accession>
<protein>
    <recommendedName>
        <fullName evidence="4">Uncharacterized bromodomain-containing protein 10</fullName>
    </recommendedName>
</protein>
<gene>
    <name evidence="6" type="primary">BRD10</name>
    <name type="synonym">KIAA2026</name>
</gene>
<organism>
    <name type="scientific">Homo sapiens</name>
    <name type="common">Human</name>
    <dbReference type="NCBI Taxonomy" id="9606"/>
    <lineage>
        <taxon>Eukaryota</taxon>
        <taxon>Metazoa</taxon>
        <taxon>Chordata</taxon>
        <taxon>Craniata</taxon>
        <taxon>Vertebrata</taxon>
        <taxon>Euteleostomi</taxon>
        <taxon>Mammalia</taxon>
        <taxon>Eutheria</taxon>
        <taxon>Euarchontoglires</taxon>
        <taxon>Primates</taxon>
        <taxon>Haplorrhini</taxon>
        <taxon>Catarrhini</taxon>
        <taxon>Hominidae</taxon>
        <taxon>Homo</taxon>
    </lineage>
</organism>
<feature type="chain" id="PRO_0000288922" description="Uncharacterized bromodomain-containing protein 10">
    <location>
        <begin position="1"/>
        <end position="2103"/>
    </location>
</feature>
<feature type="domain" description="Bromo" evidence="1 5">
    <location>
        <begin position="77"/>
        <end position="196"/>
    </location>
</feature>
<feature type="region of interest" description="Disordered" evidence="2">
    <location>
        <begin position="1"/>
        <end position="61"/>
    </location>
</feature>
<feature type="region of interest" description="Disordered" evidence="2">
    <location>
        <begin position="730"/>
        <end position="750"/>
    </location>
</feature>
<feature type="region of interest" description="Disordered" evidence="2">
    <location>
        <begin position="853"/>
        <end position="881"/>
    </location>
</feature>
<feature type="region of interest" description="Disordered" evidence="2">
    <location>
        <begin position="933"/>
        <end position="956"/>
    </location>
</feature>
<feature type="region of interest" description="Disordered" evidence="2">
    <location>
        <begin position="1224"/>
        <end position="1244"/>
    </location>
</feature>
<feature type="region of interest" description="Disordered" evidence="2">
    <location>
        <begin position="1770"/>
        <end position="1817"/>
    </location>
</feature>
<feature type="compositionally biased region" description="Low complexity" evidence="2">
    <location>
        <begin position="1"/>
        <end position="12"/>
    </location>
</feature>
<feature type="compositionally biased region" description="Acidic residues" evidence="2">
    <location>
        <begin position="51"/>
        <end position="61"/>
    </location>
</feature>
<feature type="compositionally biased region" description="Basic and acidic residues" evidence="2">
    <location>
        <begin position="865"/>
        <end position="877"/>
    </location>
</feature>
<feature type="compositionally biased region" description="Polar residues" evidence="2">
    <location>
        <begin position="1224"/>
        <end position="1234"/>
    </location>
</feature>
<feature type="compositionally biased region" description="Low complexity" evidence="2">
    <location>
        <begin position="1235"/>
        <end position="1244"/>
    </location>
</feature>
<feature type="compositionally biased region" description="Polar residues" evidence="2">
    <location>
        <begin position="1773"/>
        <end position="1794"/>
    </location>
</feature>
<feature type="compositionally biased region" description="Low complexity" evidence="2">
    <location>
        <begin position="1795"/>
        <end position="1808"/>
    </location>
</feature>
<feature type="splice variant" id="VSP_039334" description="In isoform 2." evidence="3">
    <location>
        <begin position="765"/>
        <end position="794"/>
    </location>
</feature>